<evidence type="ECO:0000255" key="1">
    <source>
        <dbReference type="HAMAP-Rule" id="MF_00480"/>
    </source>
</evidence>
<evidence type="ECO:0000305" key="2"/>
<protein>
    <recommendedName>
        <fullName evidence="1">Small ribosomal subunit protein uS7</fullName>
    </recommendedName>
    <alternativeName>
        <fullName evidence="2">30S ribosomal protein S7</fullName>
    </alternativeName>
</protein>
<proteinExistence type="inferred from homology"/>
<comment type="function">
    <text evidence="1">One of the primary rRNA binding proteins, it binds directly to 16S rRNA where it nucleates assembly of the head domain of the 30S subunit. Is located at the subunit interface close to the decoding center, probably blocks exit of the E-site tRNA.</text>
</comment>
<comment type="subunit">
    <text evidence="1">Part of the 30S ribosomal subunit. Contacts proteins S9 and S11.</text>
</comment>
<comment type="similarity">
    <text evidence="1">Belongs to the universal ribosomal protein uS7 family.</text>
</comment>
<feature type="chain" id="PRO_0000124223" description="Small ribosomal subunit protein uS7">
    <location>
        <begin position="1"/>
        <end position="157"/>
    </location>
</feature>
<organism>
    <name type="scientific">Bdellovibrio bacteriovorus (strain ATCC 15356 / DSM 50701 / NCIMB 9529 / HD100)</name>
    <dbReference type="NCBI Taxonomy" id="264462"/>
    <lineage>
        <taxon>Bacteria</taxon>
        <taxon>Pseudomonadati</taxon>
        <taxon>Bdellovibrionota</taxon>
        <taxon>Bdellovibrionia</taxon>
        <taxon>Bdellovibrionales</taxon>
        <taxon>Pseudobdellovibrionaceae</taxon>
        <taxon>Bdellovibrio</taxon>
    </lineage>
</organism>
<name>RS7_BDEBA</name>
<sequence>MSRRKKTFKREIIPDPVFKDLVIAKFINKMMIQGRKATSQKLFYGALKELEGKVQGEEPLAVFKKALENVKPSIEVRSRRVGGATYQVPVDVRPSRRLALAMRWLVEYSRERGEKDMAKRLAGEFLDAYNNRGNAIKKKDDVHRMAESNKAFSHYNW</sequence>
<keyword id="KW-1185">Reference proteome</keyword>
<keyword id="KW-0687">Ribonucleoprotein</keyword>
<keyword id="KW-0689">Ribosomal protein</keyword>
<keyword id="KW-0694">RNA-binding</keyword>
<keyword id="KW-0699">rRNA-binding</keyword>
<keyword id="KW-0820">tRNA-binding</keyword>
<dbReference type="EMBL" id="BX842654">
    <property type="protein sequence ID" value="CAE80751.1"/>
    <property type="molecule type" value="Genomic_DNA"/>
</dbReference>
<dbReference type="RefSeq" id="WP_011165355.1">
    <property type="nucleotide sequence ID" value="NC_005363.1"/>
</dbReference>
<dbReference type="SMR" id="Q6MJ12"/>
<dbReference type="STRING" id="264462.Bd2980"/>
<dbReference type="GeneID" id="93013842"/>
<dbReference type="KEGG" id="bba:Bd2980"/>
<dbReference type="eggNOG" id="COG0049">
    <property type="taxonomic scope" value="Bacteria"/>
</dbReference>
<dbReference type="HOGENOM" id="CLU_072226_1_1_7"/>
<dbReference type="Proteomes" id="UP000008080">
    <property type="component" value="Chromosome"/>
</dbReference>
<dbReference type="GO" id="GO:0015935">
    <property type="term" value="C:small ribosomal subunit"/>
    <property type="evidence" value="ECO:0007669"/>
    <property type="project" value="InterPro"/>
</dbReference>
<dbReference type="GO" id="GO:0019843">
    <property type="term" value="F:rRNA binding"/>
    <property type="evidence" value="ECO:0007669"/>
    <property type="project" value="UniProtKB-UniRule"/>
</dbReference>
<dbReference type="GO" id="GO:0003735">
    <property type="term" value="F:structural constituent of ribosome"/>
    <property type="evidence" value="ECO:0007669"/>
    <property type="project" value="InterPro"/>
</dbReference>
<dbReference type="GO" id="GO:0000049">
    <property type="term" value="F:tRNA binding"/>
    <property type="evidence" value="ECO:0007669"/>
    <property type="project" value="UniProtKB-UniRule"/>
</dbReference>
<dbReference type="GO" id="GO:0006412">
    <property type="term" value="P:translation"/>
    <property type="evidence" value="ECO:0007669"/>
    <property type="project" value="UniProtKB-UniRule"/>
</dbReference>
<dbReference type="CDD" id="cd14869">
    <property type="entry name" value="uS7_Bacteria"/>
    <property type="match status" value="1"/>
</dbReference>
<dbReference type="FunFam" id="1.10.455.10:FF:000001">
    <property type="entry name" value="30S ribosomal protein S7"/>
    <property type="match status" value="1"/>
</dbReference>
<dbReference type="Gene3D" id="1.10.455.10">
    <property type="entry name" value="Ribosomal protein S7 domain"/>
    <property type="match status" value="1"/>
</dbReference>
<dbReference type="HAMAP" id="MF_00480_B">
    <property type="entry name" value="Ribosomal_uS7_B"/>
    <property type="match status" value="1"/>
</dbReference>
<dbReference type="InterPro" id="IPR000235">
    <property type="entry name" value="Ribosomal_uS7"/>
</dbReference>
<dbReference type="InterPro" id="IPR005717">
    <property type="entry name" value="Ribosomal_uS7_bac/org-type"/>
</dbReference>
<dbReference type="InterPro" id="IPR023798">
    <property type="entry name" value="Ribosomal_uS7_dom"/>
</dbReference>
<dbReference type="InterPro" id="IPR036823">
    <property type="entry name" value="Ribosomal_uS7_dom_sf"/>
</dbReference>
<dbReference type="NCBIfam" id="TIGR01029">
    <property type="entry name" value="rpsG_bact"/>
    <property type="match status" value="1"/>
</dbReference>
<dbReference type="PANTHER" id="PTHR11205">
    <property type="entry name" value="RIBOSOMAL PROTEIN S7"/>
    <property type="match status" value="1"/>
</dbReference>
<dbReference type="Pfam" id="PF00177">
    <property type="entry name" value="Ribosomal_S7"/>
    <property type="match status" value="1"/>
</dbReference>
<dbReference type="PIRSF" id="PIRSF002122">
    <property type="entry name" value="RPS7p_RPS7a_RPS5e_RPS7o"/>
    <property type="match status" value="1"/>
</dbReference>
<dbReference type="SUPFAM" id="SSF47973">
    <property type="entry name" value="Ribosomal protein S7"/>
    <property type="match status" value="1"/>
</dbReference>
<accession>Q6MJ12</accession>
<gene>
    <name evidence="1" type="primary">rpsG</name>
    <name type="ordered locus">Bd2980</name>
</gene>
<reference key="1">
    <citation type="journal article" date="2004" name="Science">
        <title>A predator unmasked: life cycle of Bdellovibrio bacteriovorus from a genomic perspective.</title>
        <authorList>
            <person name="Rendulic S."/>
            <person name="Jagtap P."/>
            <person name="Rosinus A."/>
            <person name="Eppinger M."/>
            <person name="Baar C."/>
            <person name="Lanz C."/>
            <person name="Keller H."/>
            <person name="Lambert C."/>
            <person name="Evans K.J."/>
            <person name="Goesmann A."/>
            <person name="Meyer F."/>
            <person name="Sockett R.E."/>
            <person name="Schuster S.C."/>
        </authorList>
    </citation>
    <scope>NUCLEOTIDE SEQUENCE [LARGE SCALE GENOMIC DNA]</scope>
    <source>
        <strain>ATCC 15356 / DSM 50701 / NCIMB 9529 / HD100</strain>
    </source>
</reference>